<keyword id="KW-0903">Direct protein sequencing</keyword>
<keyword id="KW-1015">Disulfide bond</keyword>
<keyword id="KW-1213">G-protein coupled receptor impairing toxin</keyword>
<keyword id="KW-0528">Neurotoxin</keyword>
<keyword id="KW-0629">Postsynaptic neurotoxin</keyword>
<keyword id="KW-0964">Secreted</keyword>
<keyword id="KW-0800">Toxin</keyword>
<reference key="1">
    <citation type="journal article" date="1985" name="Int. J. Biochem.">
        <title>The amino acid sequence of protein CM-3 from Dendroaspis polylepis polylepis (black mamba) venom.</title>
        <authorList>
            <person name="Joubert F.J."/>
        </authorList>
    </citation>
    <scope>PROTEIN SEQUENCE</scope>
    <scope>TOXIC DOSE</scope>
    <scope>SUBCELLULAR LOCATION</scope>
    <source>
        <tissue>Venom</tissue>
    </source>
</reference>
<reference key="2">
    <citation type="journal article" date="2013" name="Toxicon">
        <title>New alpha-adrenergic property for synthetic MTbeta and CM-3 three-finger fold toxins from black mamba.</title>
        <authorList>
            <person name="Blanchet G."/>
            <person name="Upert G."/>
            <person name="Mourier G."/>
            <person name="Gilquin B."/>
            <person name="Gilles N."/>
            <person name="Servent D."/>
        </authorList>
    </citation>
    <scope>FUNCTION</scope>
    <scope>SYNTHESIS</scope>
</reference>
<organism>
    <name type="scientific">Dendroaspis polylepis polylepis</name>
    <name type="common">Black mamba</name>
    <dbReference type="NCBI Taxonomy" id="8620"/>
    <lineage>
        <taxon>Eukaryota</taxon>
        <taxon>Metazoa</taxon>
        <taxon>Chordata</taxon>
        <taxon>Craniata</taxon>
        <taxon>Vertebrata</taxon>
        <taxon>Euteleostomi</taxon>
        <taxon>Lepidosauria</taxon>
        <taxon>Squamata</taxon>
        <taxon>Bifurcata</taxon>
        <taxon>Unidentata</taxon>
        <taxon>Episquamata</taxon>
        <taxon>Toxicofera</taxon>
        <taxon>Serpentes</taxon>
        <taxon>Colubroidea</taxon>
        <taxon>Elapidae</taxon>
        <taxon>Elapinae</taxon>
        <taxon>Dendroaspis</taxon>
    </lineage>
</organism>
<proteinExistence type="evidence at protein level"/>
<comment type="function">
    <text evidence="2">Highly potent on various alpha-adrenoceptors (ADRA) (subnanomolar affinity for ADRA1A). Order of potency is the following: ADRA1A (Ki=0.37 nM) &gt; ADRA1B (Ki=10.47 nM) &gt; ADRA1D (Ki=104.71 nM) &gt; ADRA2C (Ki=165.96 nM). Were also found to reversibly bind to muscarinic acetylcholine receptors (CHRM), but the affinity is much weaker (CHRM1, Ki=1778.28 nM; CHRM4, Ki=4466.84 nM; CHRM2, Ki=17782.79 nM).</text>
</comment>
<comment type="subcellular location">
    <subcellularLocation>
        <location evidence="3">Secreted</location>
    </subcellularLocation>
</comment>
<comment type="tissue specificity">
    <text evidence="6">Expressed by the venom gland.</text>
</comment>
<comment type="toxic dose">
    <text evidence="3">LD(50) is 56 mg/kg by intravenous injection.</text>
</comment>
<comment type="miscellaneous">
    <text evidence="2">Negative results: does not bind to muscarinic receptors CHRM5 and CHRM3.</text>
</comment>
<comment type="miscellaneous">
    <text evidence="5">Is classified as a P-type cytotoxin, since a proline residue stands at position 33 (Pro-31 in standard classification).</text>
</comment>
<comment type="similarity">
    <text evidence="5">Belongs to the three-finger toxin family. Short-chain subfamily. Aminergic toxin sub-subfamily.</text>
</comment>
<feature type="chain" id="PRO_0000093623" description="Adrenergic toxin rho-elapitoxin-Dp1b" evidence="3">
    <location>
        <begin position="1"/>
        <end position="65"/>
    </location>
</feature>
<feature type="disulfide bond" evidence="1">
    <location>
        <begin position="3"/>
        <end position="24"/>
    </location>
</feature>
<feature type="disulfide bond" evidence="1">
    <location>
        <begin position="17"/>
        <end position="42"/>
    </location>
</feature>
<feature type="disulfide bond" evidence="1">
    <location>
        <begin position="46"/>
        <end position="57"/>
    </location>
</feature>
<feature type="disulfide bond" evidence="1">
    <location>
        <begin position="58"/>
        <end position="63"/>
    </location>
</feature>
<accession>P25518</accession>
<sequence length="65" mass="7344">LTCVTSKSIFGITTEDCPDGQNLCFKRRHYVVPKIYDITRGCVATCPIPENYDSIHCCKTEKCNN</sequence>
<evidence type="ECO:0000250" key="1">
    <source>
        <dbReference type="UniProtKB" id="P60301"/>
    </source>
</evidence>
<evidence type="ECO:0000269" key="2">
    <source>
    </source>
</evidence>
<evidence type="ECO:0000269" key="3">
    <source>
    </source>
</evidence>
<evidence type="ECO:0000303" key="4">
    <source>
    </source>
</evidence>
<evidence type="ECO:0000305" key="5"/>
<evidence type="ECO:0000305" key="6">
    <source>
    </source>
</evidence>
<protein>
    <recommendedName>
        <fullName evidence="5">Adrenergic toxin rho-elapitoxin-Dp1b</fullName>
        <shortName evidence="5">rho-EPTX-Dp1b</shortName>
    </recommendedName>
    <alternativeName>
        <fullName>Muscarinic toxin CM-3</fullName>
    </alternativeName>
    <alternativeName>
        <fullName evidence="4">Protein CM-3</fullName>
    </alternativeName>
</protein>
<name>3SI3_DENPO</name>
<dbReference type="SMR" id="P25518"/>
<dbReference type="GO" id="GO:0005576">
    <property type="term" value="C:extracellular region"/>
    <property type="evidence" value="ECO:0007669"/>
    <property type="project" value="UniProtKB-SubCell"/>
</dbReference>
<dbReference type="GO" id="GO:0090729">
    <property type="term" value="F:toxin activity"/>
    <property type="evidence" value="ECO:0007669"/>
    <property type="project" value="UniProtKB-KW"/>
</dbReference>
<dbReference type="CDD" id="cd00206">
    <property type="entry name" value="TFP_snake_toxin"/>
    <property type="match status" value="1"/>
</dbReference>
<dbReference type="FunFam" id="2.10.60.10:FF:000024">
    <property type="entry name" value="Cytotoxin 1"/>
    <property type="match status" value="1"/>
</dbReference>
<dbReference type="Gene3D" id="2.10.60.10">
    <property type="entry name" value="CD59"/>
    <property type="match status" value="1"/>
</dbReference>
<dbReference type="InterPro" id="IPR003572">
    <property type="entry name" value="Cytotoxin_Cobra"/>
</dbReference>
<dbReference type="InterPro" id="IPR003571">
    <property type="entry name" value="Snake_3FTx"/>
</dbReference>
<dbReference type="InterPro" id="IPR045860">
    <property type="entry name" value="Snake_toxin-like_sf"/>
</dbReference>
<dbReference type="InterPro" id="IPR018354">
    <property type="entry name" value="Snake_toxin_con_site"/>
</dbReference>
<dbReference type="InterPro" id="IPR054131">
    <property type="entry name" value="Toxin_cobra-type"/>
</dbReference>
<dbReference type="Pfam" id="PF21947">
    <property type="entry name" value="Toxin_cobra-type"/>
    <property type="match status" value="1"/>
</dbReference>
<dbReference type="PRINTS" id="PR00282">
    <property type="entry name" value="CYTOTOXIN"/>
</dbReference>
<dbReference type="SUPFAM" id="SSF57302">
    <property type="entry name" value="Snake toxin-like"/>
    <property type="match status" value="1"/>
</dbReference>
<dbReference type="PROSITE" id="PS00272">
    <property type="entry name" value="SNAKE_TOXIN"/>
    <property type="match status" value="1"/>
</dbReference>